<keyword id="KW-0058">Aromatic hydrocarbons catabolism</keyword>
<keyword id="KW-0274">FAD</keyword>
<keyword id="KW-0285">Flavoprotein</keyword>
<keyword id="KW-0520">NAD</keyword>
<keyword id="KW-0560">Oxidoreductase</keyword>
<sequence length="554" mass="62153">MAIQHPDIQPAVNHSVQVAIAGAGPVGLMMANYLGQMGIDVLVVEKLDKLIDYPRAIGIDDEALRTMQSVGLVDNVLPHTTPWHAMRFLTPKGRCFADIQPMTDEFGWPRRNAFIQPQVDAVMLEGLSRFPNVRCLFSRELEAFSQQDDEVTVHLKTAEGQREIVKAQWLVACDGGASFVRRTLNVPFEGKTAPNQWIVVDIANDPLSTPHIYLCCDPVRPYVSAALPHAVRRFEFMVMPGETEEQLREPQNMRKLLSKVLPNPDNVELIRQRVYTHNARLAQRFRIDRVLLAGDAAHIMPVWQGQGYNSGMRDAFNLAWKLALVIQGKARDALLDTYQQERRDHAKAMIDLSVTAGNVLAPPKRWQGTLRDGVSWLLNYLPPVKRYFLEMRFKPMPQYYGGALVREGEAKHSPVGKMFIQPKVTLENGDVTLLDNAIGANFAVIGWGCNPLWGMSDEQIQQWRALGTRFIQVVPEVQIHTAQDNHDGVLRVGDTQGRLRSWFAQHNASLVVMRPDRFVAATAIPQTLGKTLNKLASVMTLTRPDADVSVEKVA</sequence>
<organism>
    <name type="scientific">Escherichia coli O81 (strain ED1a)</name>
    <dbReference type="NCBI Taxonomy" id="585397"/>
    <lineage>
        <taxon>Bacteria</taxon>
        <taxon>Pseudomonadati</taxon>
        <taxon>Pseudomonadota</taxon>
        <taxon>Gammaproteobacteria</taxon>
        <taxon>Enterobacterales</taxon>
        <taxon>Enterobacteriaceae</taxon>
        <taxon>Escherichia</taxon>
    </lineage>
</organism>
<dbReference type="EC" id="1.14.13.127" evidence="1"/>
<dbReference type="EMBL" id="CU928162">
    <property type="protein sequence ID" value="CAR06586.1"/>
    <property type="molecule type" value="Genomic_DNA"/>
</dbReference>
<dbReference type="RefSeq" id="WP_001007424.1">
    <property type="nucleotide sequence ID" value="NC_011745.1"/>
</dbReference>
<dbReference type="SMR" id="B7MPB4"/>
<dbReference type="KEGG" id="ecq:ECED1_0375"/>
<dbReference type="HOGENOM" id="CLU_009665_20_2_6"/>
<dbReference type="UniPathway" id="UPA00714"/>
<dbReference type="Proteomes" id="UP000000748">
    <property type="component" value="Chromosome"/>
</dbReference>
<dbReference type="GO" id="GO:0008688">
    <property type="term" value="F:3-(3-hydroxyphenyl)propionate hydroxylase activity"/>
    <property type="evidence" value="ECO:0007669"/>
    <property type="project" value="UniProtKB-UniRule"/>
</dbReference>
<dbReference type="GO" id="GO:0071949">
    <property type="term" value="F:FAD binding"/>
    <property type="evidence" value="ECO:0007669"/>
    <property type="project" value="InterPro"/>
</dbReference>
<dbReference type="GO" id="GO:0019622">
    <property type="term" value="P:3-(3-hydroxy)phenylpropionate catabolic process"/>
    <property type="evidence" value="ECO:0007669"/>
    <property type="project" value="UniProtKB-UniRule"/>
</dbReference>
<dbReference type="GO" id="GO:0019380">
    <property type="term" value="P:3-phenylpropionate catabolic process"/>
    <property type="evidence" value="ECO:0007669"/>
    <property type="project" value="UniProtKB-UniPathway"/>
</dbReference>
<dbReference type="FunFam" id="3.30.70.2450:FF:000001">
    <property type="entry name" value="3-(3-hydroxy-phenyl)propionate/3-hydroxycinnamic acid hydroxylase"/>
    <property type="match status" value="1"/>
</dbReference>
<dbReference type="FunFam" id="3.50.50.60:FF:000126">
    <property type="entry name" value="3-(3-hydroxy-phenyl)propionate/3-hydroxycinnamic acid hydroxylase"/>
    <property type="match status" value="1"/>
</dbReference>
<dbReference type="Gene3D" id="3.30.70.2450">
    <property type="match status" value="1"/>
</dbReference>
<dbReference type="Gene3D" id="3.50.50.60">
    <property type="entry name" value="FAD/NAD(P)-binding domain"/>
    <property type="match status" value="1"/>
</dbReference>
<dbReference type="HAMAP" id="MF_01652">
    <property type="entry name" value="MhpA"/>
    <property type="match status" value="1"/>
</dbReference>
<dbReference type="InterPro" id="IPR023786">
    <property type="entry name" value="3-HPP/3HCI_hydroxylase"/>
</dbReference>
<dbReference type="InterPro" id="IPR002938">
    <property type="entry name" value="FAD-bd"/>
</dbReference>
<dbReference type="InterPro" id="IPR036188">
    <property type="entry name" value="FAD/NAD-bd_sf"/>
</dbReference>
<dbReference type="InterPro" id="IPR050631">
    <property type="entry name" value="PheA/TfdB_FAD_monoxygenase"/>
</dbReference>
<dbReference type="NCBIfam" id="NF004827">
    <property type="entry name" value="PRK06183.1-1"/>
    <property type="match status" value="1"/>
</dbReference>
<dbReference type="NCBIfam" id="NF004829">
    <property type="entry name" value="PRK06183.1-3"/>
    <property type="match status" value="1"/>
</dbReference>
<dbReference type="NCBIfam" id="NF004831">
    <property type="entry name" value="PRK06183.1-5"/>
    <property type="match status" value="1"/>
</dbReference>
<dbReference type="PANTHER" id="PTHR43476">
    <property type="entry name" value="3-(3-HYDROXY-PHENYL)PROPIONATE/3-HYDROXYCINNAMIC ACID HYDROXYLASE"/>
    <property type="match status" value="1"/>
</dbReference>
<dbReference type="PANTHER" id="PTHR43476:SF3">
    <property type="entry name" value="FAD-BINDING MONOOXYGENASE"/>
    <property type="match status" value="1"/>
</dbReference>
<dbReference type="Pfam" id="PF01494">
    <property type="entry name" value="FAD_binding_3"/>
    <property type="match status" value="1"/>
</dbReference>
<dbReference type="PRINTS" id="PR00420">
    <property type="entry name" value="RNGMNOXGNASE"/>
</dbReference>
<dbReference type="SUPFAM" id="SSF51905">
    <property type="entry name" value="FAD/NAD(P)-binding domain"/>
    <property type="match status" value="1"/>
</dbReference>
<proteinExistence type="inferred from homology"/>
<accession>B7MPB4</accession>
<gene>
    <name evidence="1" type="primary">mhpA</name>
    <name type="ordered locus">ECED1_0375</name>
</gene>
<feature type="chain" id="PRO_1000186992" description="3-(3-hydroxy-phenyl)propionate/3-hydroxycinnamic acid hydroxylase">
    <location>
        <begin position="1"/>
        <end position="554"/>
    </location>
</feature>
<feature type="binding site" evidence="1">
    <location>
        <begin position="17"/>
        <end position="46"/>
    </location>
    <ligand>
        <name>FAD</name>
        <dbReference type="ChEBI" id="CHEBI:57692"/>
    </ligand>
</feature>
<feature type="binding site" evidence="1">
    <location>
        <begin position="285"/>
        <end position="295"/>
    </location>
    <ligand>
        <name>FAD</name>
        <dbReference type="ChEBI" id="CHEBI:57692"/>
    </ligand>
</feature>
<reference key="1">
    <citation type="journal article" date="2009" name="PLoS Genet.">
        <title>Organised genome dynamics in the Escherichia coli species results in highly diverse adaptive paths.</title>
        <authorList>
            <person name="Touchon M."/>
            <person name="Hoede C."/>
            <person name="Tenaillon O."/>
            <person name="Barbe V."/>
            <person name="Baeriswyl S."/>
            <person name="Bidet P."/>
            <person name="Bingen E."/>
            <person name="Bonacorsi S."/>
            <person name="Bouchier C."/>
            <person name="Bouvet O."/>
            <person name="Calteau A."/>
            <person name="Chiapello H."/>
            <person name="Clermont O."/>
            <person name="Cruveiller S."/>
            <person name="Danchin A."/>
            <person name="Diard M."/>
            <person name="Dossat C."/>
            <person name="Karoui M.E."/>
            <person name="Frapy E."/>
            <person name="Garry L."/>
            <person name="Ghigo J.M."/>
            <person name="Gilles A.M."/>
            <person name="Johnson J."/>
            <person name="Le Bouguenec C."/>
            <person name="Lescat M."/>
            <person name="Mangenot S."/>
            <person name="Martinez-Jehanne V."/>
            <person name="Matic I."/>
            <person name="Nassif X."/>
            <person name="Oztas S."/>
            <person name="Petit M.A."/>
            <person name="Pichon C."/>
            <person name="Rouy Z."/>
            <person name="Ruf C.S."/>
            <person name="Schneider D."/>
            <person name="Tourret J."/>
            <person name="Vacherie B."/>
            <person name="Vallenet D."/>
            <person name="Medigue C."/>
            <person name="Rocha E.P.C."/>
            <person name="Denamur E."/>
        </authorList>
    </citation>
    <scope>NUCLEOTIDE SEQUENCE [LARGE SCALE GENOMIC DNA]</scope>
    <source>
        <strain>ED1a</strain>
    </source>
</reference>
<protein>
    <recommendedName>
        <fullName evidence="1">3-(3-hydroxy-phenyl)propionate/3-hydroxycinnamic acid hydroxylase</fullName>
        <shortName evidence="1">3-HCI hydroxylase</shortName>
        <shortName evidence="1">3-HPP hydroxylase</shortName>
        <ecNumber evidence="1">1.14.13.127</ecNumber>
    </recommendedName>
</protein>
<name>MHPA_ECO81</name>
<evidence type="ECO:0000255" key="1">
    <source>
        <dbReference type="HAMAP-Rule" id="MF_01652"/>
    </source>
</evidence>
<comment type="function">
    <text evidence="1">Catalyzes the insertion of one atom of molecular oxygen into position 2 of the phenyl ring of 3-(3-hydroxyphenyl)propionate (3-HPP) and hydroxycinnamic acid (3HCI).</text>
</comment>
<comment type="catalytic activity">
    <reaction evidence="1">
        <text>3-(3-hydroxyphenyl)propanoate + NADH + O2 + H(+) = 3-(2,3-dihydroxyphenyl)propanoate + NAD(+) + H2O</text>
        <dbReference type="Rhea" id="RHEA:24785"/>
        <dbReference type="ChEBI" id="CHEBI:15377"/>
        <dbReference type="ChEBI" id="CHEBI:15378"/>
        <dbReference type="ChEBI" id="CHEBI:15379"/>
        <dbReference type="ChEBI" id="CHEBI:46951"/>
        <dbReference type="ChEBI" id="CHEBI:57277"/>
        <dbReference type="ChEBI" id="CHEBI:57540"/>
        <dbReference type="ChEBI" id="CHEBI:57945"/>
        <dbReference type="EC" id="1.14.13.127"/>
    </reaction>
</comment>
<comment type="catalytic activity">
    <reaction evidence="1">
        <text>(2E)-3-(3-hydroxyphenyl)prop-2-enoate + NADH + O2 + H(+) = (2E)-3-(2,3-dihydroxyphenyl)prop-2-enoate + NAD(+) + H2O</text>
        <dbReference type="Rhea" id="RHEA:27846"/>
        <dbReference type="ChEBI" id="CHEBI:15377"/>
        <dbReference type="ChEBI" id="CHEBI:15378"/>
        <dbReference type="ChEBI" id="CHEBI:15379"/>
        <dbReference type="ChEBI" id="CHEBI:47928"/>
        <dbReference type="ChEBI" id="CHEBI:57540"/>
        <dbReference type="ChEBI" id="CHEBI:57945"/>
        <dbReference type="ChEBI" id="CHEBI:58642"/>
        <dbReference type="EC" id="1.14.13.127"/>
    </reaction>
</comment>
<comment type="cofactor">
    <cofactor evidence="1">
        <name>FAD</name>
        <dbReference type="ChEBI" id="CHEBI:57692"/>
    </cofactor>
</comment>
<comment type="pathway">
    <text evidence="1">Aromatic compound metabolism; 3-phenylpropanoate degradation.</text>
</comment>
<comment type="similarity">
    <text evidence="1">Belongs to the PheA/TfdB FAD monooxygenase family.</text>
</comment>